<keyword id="KW-0324">Glycolysis</keyword>
<keyword id="KW-0413">Isomerase</keyword>
<keyword id="KW-0464">Manganese</keyword>
<keyword id="KW-0479">Metal-binding</keyword>
<proteinExistence type="inferred from homology"/>
<accession>A4ST23</accession>
<feature type="chain" id="PRO_1000063942" description="2,3-bisphosphoglycerate-independent phosphoglycerate mutase">
    <location>
        <begin position="1"/>
        <end position="509"/>
    </location>
</feature>
<feature type="active site" description="Phosphoserine intermediate" evidence="1">
    <location>
        <position position="64"/>
    </location>
</feature>
<feature type="binding site" evidence="1">
    <location>
        <position position="14"/>
    </location>
    <ligand>
        <name>Mn(2+)</name>
        <dbReference type="ChEBI" id="CHEBI:29035"/>
        <label>2</label>
    </ligand>
</feature>
<feature type="binding site" evidence="1">
    <location>
        <position position="64"/>
    </location>
    <ligand>
        <name>Mn(2+)</name>
        <dbReference type="ChEBI" id="CHEBI:29035"/>
        <label>2</label>
    </ligand>
</feature>
<feature type="binding site" evidence="1">
    <location>
        <position position="125"/>
    </location>
    <ligand>
        <name>substrate</name>
    </ligand>
</feature>
<feature type="binding site" evidence="1">
    <location>
        <begin position="155"/>
        <end position="156"/>
    </location>
    <ligand>
        <name>substrate</name>
    </ligand>
</feature>
<feature type="binding site" evidence="1">
    <location>
        <position position="187"/>
    </location>
    <ligand>
        <name>substrate</name>
    </ligand>
</feature>
<feature type="binding site" evidence="1">
    <location>
        <position position="193"/>
    </location>
    <ligand>
        <name>substrate</name>
    </ligand>
</feature>
<feature type="binding site" evidence="1">
    <location>
        <begin position="259"/>
        <end position="262"/>
    </location>
    <ligand>
        <name>substrate</name>
    </ligand>
</feature>
<feature type="binding site" evidence="1">
    <location>
        <position position="332"/>
    </location>
    <ligand>
        <name>substrate</name>
    </ligand>
</feature>
<feature type="binding site" evidence="1">
    <location>
        <position position="399"/>
    </location>
    <ligand>
        <name>Mn(2+)</name>
        <dbReference type="ChEBI" id="CHEBI:29035"/>
        <label>1</label>
    </ligand>
</feature>
<feature type="binding site" evidence="1">
    <location>
        <position position="403"/>
    </location>
    <ligand>
        <name>Mn(2+)</name>
        <dbReference type="ChEBI" id="CHEBI:29035"/>
        <label>1</label>
    </ligand>
</feature>
<feature type="binding site" evidence="1">
    <location>
        <position position="440"/>
    </location>
    <ligand>
        <name>Mn(2+)</name>
        <dbReference type="ChEBI" id="CHEBI:29035"/>
        <label>2</label>
    </ligand>
</feature>
<feature type="binding site" evidence="1">
    <location>
        <position position="441"/>
    </location>
    <ligand>
        <name>Mn(2+)</name>
        <dbReference type="ChEBI" id="CHEBI:29035"/>
        <label>2</label>
    </ligand>
</feature>
<feature type="binding site" evidence="1">
    <location>
        <position position="459"/>
    </location>
    <ligand>
        <name>Mn(2+)</name>
        <dbReference type="ChEBI" id="CHEBI:29035"/>
        <label>1</label>
    </ligand>
</feature>
<comment type="function">
    <text evidence="1">Catalyzes the interconversion of 2-phosphoglycerate and 3-phosphoglycerate.</text>
</comment>
<comment type="catalytic activity">
    <reaction evidence="1">
        <text>(2R)-2-phosphoglycerate = (2R)-3-phosphoglycerate</text>
        <dbReference type="Rhea" id="RHEA:15901"/>
        <dbReference type="ChEBI" id="CHEBI:58272"/>
        <dbReference type="ChEBI" id="CHEBI:58289"/>
        <dbReference type="EC" id="5.4.2.12"/>
    </reaction>
</comment>
<comment type="cofactor">
    <cofactor evidence="1">
        <name>Mn(2+)</name>
        <dbReference type="ChEBI" id="CHEBI:29035"/>
    </cofactor>
    <text evidence="1">Binds 2 manganese ions per subunit.</text>
</comment>
<comment type="pathway">
    <text evidence="1">Carbohydrate degradation; glycolysis; pyruvate from D-glyceraldehyde 3-phosphate: step 3/5.</text>
</comment>
<comment type="subunit">
    <text evidence="1">Monomer.</text>
</comment>
<comment type="similarity">
    <text evidence="1">Belongs to the BPG-independent phosphoglycerate mutase family.</text>
</comment>
<evidence type="ECO:0000255" key="1">
    <source>
        <dbReference type="HAMAP-Rule" id="MF_01038"/>
    </source>
</evidence>
<sequence length="509" mass="55276">MSTAKKPLVLVIMDGWGYSTKQEHNAVAAAKTPNLDRLARDYTSTLISGSGLDVGLPDGQMGNSEVGHVNIGAGRIVYQELTRISKEIKDGDFFQNVELAKALDSAVTKGKAVHIMGLMSPGGVHSHEEHIMGMIEMAAKRGAEQIYFHAFLDGRDVPPRSAQSSIEQFDALFARLGKGRFASMIGRYFAMDRDNRWDRVQQAYDLMTQGKGEFTADSASEALAAAYARDENDEFVKATRIGAAAPMQDGDALIFMNFRADRAREITRAFVDSDFTGFARAATPALNFVMLTEYAADIKTACAYPPTALVNTLGEWLAKQGKTQLRISETEKYAHVTFFFNGGEESCFTGEDREIVASPKVATYDLQPEMSSEELTDKLVAAIKSGKYDTIICNYPNGDMVGHTGVFDAAVKACEAVDHCVGRVTEALAEVGGECLITADHGNAEKMLDEETGQAHTAHTNLPVPLIYFGRKAEVLEGGKLSDLAPTMLTLMGLPVPPEMTGKPLMILK</sequence>
<organism>
    <name type="scientific">Aeromonas salmonicida (strain A449)</name>
    <dbReference type="NCBI Taxonomy" id="382245"/>
    <lineage>
        <taxon>Bacteria</taxon>
        <taxon>Pseudomonadati</taxon>
        <taxon>Pseudomonadota</taxon>
        <taxon>Gammaproteobacteria</taxon>
        <taxon>Aeromonadales</taxon>
        <taxon>Aeromonadaceae</taxon>
        <taxon>Aeromonas</taxon>
    </lineage>
</organism>
<gene>
    <name evidence="1" type="primary">gpmI</name>
    <name type="ordered locus">ASA_4104</name>
</gene>
<reference key="1">
    <citation type="journal article" date="2008" name="BMC Genomics">
        <title>The genome of Aeromonas salmonicida subsp. salmonicida A449: insights into the evolution of a fish pathogen.</title>
        <authorList>
            <person name="Reith M.E."/>
            <person name="Singh R.K."/>
            <person name="Curtis B."/>
            <person name="Boyd J.M."/>
            <person name="Bouevitch A."/>
            <person name="Kimball J."/>
            <person name="Munholland J."/>
            <person name="Murphy C."/>
            <person name="Sarty D."/>
            <person name="Williams J."/>
            <person name="Nash J.H."/>
            <person name="Johnson S.C."/>
            <person name="Brown L.L."/>
        </authorList>
    </citation>
    <scope>NUCLEOTIDE SEQUENCE [LARGE SCALE GENOMIC DNA]</scope>
    <source>
        <strain>A449</strain>
    </source>
</reference>
<protein>
    <recommendedName>
        <fullName evidence="1">2,3-bisphosphoglycerate-independent phosphoglycerate mutase</fullName>
        <shortName evidence="1">BPG-independent PGAM</shortName>
        <shortName evidence="1">Phosphoglyceromutase</shortName>
        <shortName evidence="1">iPGM</shortName>
        <ecNumber evidence="1">5.4.2.12</ecNumber>
    </recommendedName>
</protein>
<name>GPMI_AERS4</name>
<dbReference type="EC" id="5.4.2.12" evidence="1"/>
<dbReference type="EMBL" id="CP000644">
    <property type="protein sequence ID" value="ABO92045.1"/>
    <property type="molecule type" value="Genomic_DNA"/>
</dbReference>
<dbReference type="SMR" id="A4ST23"/>
<dbReference type="STRING" id="29491.GCA_000820065_03449"/>
<dbReference type="KEGG" id="asa:ASA_4104"/>
<dbReference type="PATRIC" id="fig|382245.13.peg.4072"/>
<dbReference type="eggNOG" id="COG0696">
    <property type="taxonomic scope" value="Bacteria"/>
</dbReference>
<dbReference type="HOGENOM" id="CLU_026099_2_0_6"/>
<dbReference type="UniPathway" id="UPA00109">
    <property type="reaction ID" value="UER00186"/>
</dbReference>
<dbReference type="Proteomes" id="UP000000225">
    <property type="component" value="Chromosome"/>
</dbReference>
<dbReference type="GO" id="GO:0005829">
    <property type="term" value="C:cytosol"/>
    <property type="evidence" value="ECO:0007669"/>
    <property type="project" value="TreeGrafter"/>
</dbReference>
<dbReference type="GO" id="GO:0030145">
    <property type="term" value="F:manganese ion binding"/>
    <property type="evidence" value="ECO:0007669"/>
    <property type="project" value="UniProtKB-UniRule"/>
</dbReference>
<dbReference type="GO" id="GO:0004619">
    <property type="term" value="F:phosphoglycerate mutase activity"/>
    <property type="evidence" value="ECO:0007669"/>
    <property type="project" value="UniProtKB-EC"/>
</dbReference>
<dbReference type="GO" id="GO:0006007">
    <property type="term" value="P:glucose catabolic process"/>
    <property type="evidence" value="ECO:0007669"/>
    <property type="project" value="InterPro"/>
</dbReference>
<dbReference type="GO" id="GO:0006096">
    <property type="term" value="P:glycolytic process"/>
    <property type="evidence" value="ECO:0007669"/>
    <property type="project" value="UniProtKB-UniRule"/>
</dbReference>
<dbReference type="CDD" id="cd16010">
    <property type="entry name" value="iPGM"/>
    <property type="match status" value="1"/>
</dbReference>
<dbReference type="FunFam" id="3.40.1450.10:FF:000001">
    <property type="entry name" value="2,3-bisphosphoglycerate-independent phosphoglycerate mutase"/>
    <property type="match status" value="1"/>
</dbReference>
<dbReference type="FunFam" id="3.40.720.10:FF:000001">
    <property type="entry name" value="2,3-bisphosphoglycerate-independent phosphoglycerate mutase"/>
    <property type="match status" value="1"/>
</dbReference>
<dbReference type="Gene3D" id="3.40.720.10">
    <property type="entry name" value="Alkaline Phosphatase, subunit A"/>
    <property type="match status" value="1"/>
</dbReference>
<dbReference type="Gene3D" id="3.40.1450.10">
    <property type="entry name" value="BPG-independent phosphoglycerate mutase, domain B"/>
    <property type="match status" value="1"/>
</dbReference>
<dbReference type="HAMAP" id="MF_01038">
    <property type="entry name" value="GpmI"/>
    <property type="match status" value="1"/>
</dbReference>
<dbReference type="InterPro" id="IPR017850">
    <property type="entry name" value="Alkaline_phosphatase_core_sf"/>
</dbReference>
<dbReference type="InterPro" id="IPR011258">
    <property type="entry name" value="BPG-indep_PGM_N"/>
</dbReference>
<dbReference type="InterPro" id="IPR006124">
    <property type="entry name" value="Metalloenzyme"/>
</dbReference>
<dbReference type="InterPro" id="IPR036646">
    <property type="entry name" value="PGAM_B_sf"/>
</dbReference>
<dbReference type="InterPro" id="IPR005995">
    <property type="entry name" value="Pgm_bpd_ind"/>
</dbReference>
<dbReference type="NCBIfam" id="TIGR01307">
    <property type="entry name" value="pgm_bpd_ind"/>
    <property type="match status" value="1"/>
</dbReference>
<dbReference type="NCBIfam" id="NF003897">
    <property type="entry name" value="PRK05434.1-5"/>
    <property type="match status" value="1"/>
</dbReference>
<dbReference type="PANTHER" id="PTHR31637">
    <property type="entry name" value="2,3-BISPHOSPHOGLYCERATE-INDEPENDENT PHOSPHOGLYCERATE MUTASE"/>
    <property type="match status" value="1"/>
</dbReference>
<dbReference type="PANTHER" id="PTHR31637:SF0">
    <property type="entry name" value="2,3-BISPHOSPHOGLYCERATE-INDEPENDENT PHOSPHOGLYCERATE MUTASE"/>
    <property type="match status" value="1"/>
</dbReference>
<dbReference type="Pfam" id="PF06415">
    <property type="entry name" value="iPGM_N"/>
    <property type="match status" value="1"/>
</dbReference>
<dbReference type="Pfam" id="PF01676">
    <property type="entry name" value="Metalloenzyme"/>
    <property type="match status" value="1"/>
</dbReference>
<dbReference type="PIRSF" id="PIRSF001492">
    <property type="entry name" value="IPGAM"/>
    <property type="match status" value="1"/>
</dbReference>
<dbReference type="SUPFAM" id="SSF64158">
    <property type="entry name" value="2,3-Bisphosphoglycerate-independent phosphoglycerate mutase, substrate-binding domain"/>
    <property type="match status" value="1"/>
</dbReference>
<dbReference type="SUPFAM" id="SSF53649">
    <property type="entry name" value="Alkaline phosphatase-like"/>
    <property type="match status" value="1"/>
</dbReference>